<keyword id="KW-0025">Alternative splicing</keyword>
<keyword id="KW-0507">mRNA processing</keyword>
<keyword id="KW-0508">mRNA splicing</keyword>
<keyword id="KW-0539">Nucleus</keyword>
<keyword id="KW-0597">Phosphoprotein</keyword>
<keyword id="KW-1185">Reference proteome</keyword>
<keyword id="KW-0747">Spliceosome</keyword>
<sequence>MAEIQSNGRAYESLLEKVLSMNILSSDYFKELYGLKTYHEVIDEIYNQVNHVEPWMGGNCRGPSTAYCLLYKFFTMKLTVKQMHGLLKHTDSPYIRAVGFLYLRYVADAKTLWTWYEPYIKDDEEFSPGSNGRMTTMGVYVRDLLLGLYYFDTLFPRIPVPVMRQIVSNLEKMNLPTKPSGSTGDMTRGSEDTARRPPSVKASLSVSFGQRAPHRASTRGSSPVRRPPPTGYDRNGGDEVQQRSPRRSQSRDYYSDRDSDRQREREREKDRERERGRDRYRERERDYGNDRRSRRDYDSRSRRNDYEDDRSRHDRRSRSRSRSRSRSVQIEREPTPKRDSSNKEKSAVTVNSNLAKLKDLYGDASSQKRDEGFGTRKDSSSEEVIKLGGSSWR</sequence>
<organism>
    <name type="scientific">Arabidopsis thaliana</name>
    <name type="common">Mouse-ear cress</name>
    <dbReference type="NCBI Taxonomy" id="3702"/>
    <lineage>
        <taxon>Eukaryota</taxon>
        <taxon>Viridiplantae</taxon>
        <taxon>Streptophyta</taxon>
        <taxon>Embryophyta</taxon>
        <taxon>Tracheophyta</taxon>
        <taxon>Spermatophyta</taxon>
        <taxon>Magnoliopsida</taxon>
        <taxon>eudicotyledons</taxon>
        <taxon>Gunneridae</taxon>
        <taxon>Pentapetalae</taxon>
        <taxon>rosids</taxon>
        <taxon>malvids</taxon>
        <taxon>Brassicales</taxon>
        <taxon>Brassicaceae</taxon>
        <taxon>Camelineae</taxon>
        <taxon>Arabidopsis</taxon>
    </lineage>
</organism>
<feature type="chain" id="PRO_0000438411" description="Pre-mRNA splicing factor SR-like 1">
    <location>
        <begin position="1"/>
        <end position="393"/>
    </location>
</feature>
<feature type="region of interest" description="Disordered" evidence="2">
    <location>
        <begin position="173"/>
        <end position="393"/>
    </location>
</feature>
<feature type="short sequence motif" description="Nuclear localization signal" evidence="1">
    <location>
        <begin position="301"/>
        <end position="308"/>
    </location>
</feature>
<feature type="compositionally biased region" description="Basic and acidic residues" evidence="2">
    <location>
        <begin position="249"/>
        <end position="312"/>
    </location>
</feature>
<feature type="compositionally biased region" description="Basic residues" evidence="2">
    <location>
        <begin position="313"/>
        <end position="325"/>
    </location>
</feature>
<feature type="compositionally biased region" description="Basic and acidic residues" evidence="2">
    <location>
        <begin position="329"/>
        <end position="346"/>
    </location>
</feature>
<feature type="compositionally biased region" description="Basic and acidic residues" evidence="2">
    <location>
        <begin position="356"/>
        <end position="385"/>
    </location>
</feature>
<feature type="splice variant" id="VSP_058660" description="In isoform 2.">
    <location>
        <begin position="141"/>
        <end position="148"/>
    </location>
</feature>
<evidence type="ECO:0000255" key="1">
    <source>
        <dbReference type="PROSITE-ProRule" id="PRU00768"/>
    </source>
</evidence>
<evidence type="ECO:0000256" key="2">
    <source>
        <dbReference type="SAM" id="MobiDB-lite"/>
    </source>
</evidence>
<evidence type="ECO:0000269" key="3">
    <source>
    </source>
</evidence>
<evidence type="ECO:0000303" key="4">
    <source>
    </source>
</evidence>
<evidence type="ECO:0000305" key="5"/>
<evidence type="ECO:0000312" key="6">
    <source>
        <dbReference type="Araport" id="AT5G37370"/>
    </source>
</evidence>
<evidence type="ECO:0000312" key="7">
    <source>
        <dbReference type="EMBL" id="BAB09109.1"/>
    </source>
</evidence>
<name>SRL1_ARATH</name>
<reference key="1">
    <citation type="submission" date="1998-08" db="EMBL/GenBank/DDBJ databases">
        <title>Structural analysis of Arabidopsis thaliana chromosome 5. XI.</title>
        <authorList>
            <person name="Kaneko T."/>
            <person name="Katoh T."/>
            <person name="Asamizu E."/>
            <person name="Sato S."/>
            <person name="Nakamura Y."/>
            <person name="Kotani H."/>
            <person name="Tabata S."/>
        </authorList>
    </citation>
    <scope>NUCLEOTIDE SEQUENCE [LARGE SCALE GENOMIC DNA]</scope>
    <source>
        <strain>cv. Columbia</strain>
    </source>
</reference>
<reference key="2">
    <citation type="journal article" date="2017" name="Plant J.">
        <title>Araport11: a complete reannotation of the Arabidopsis thaliana reference genome.</title>
        <authorList>
            <person name="Cheng C.Y."/>
            <person name="Krishnakumar V."/>
            <person name="Chan A.P."/>
            <person name="Thibaud-Nissen F."/>
            <person name="Schobel S."/>
            <person name="Town C.D."/>
        </authorList>
    </citation>
    <scope>GENOME REANNOTATION</scope>
    <source>
        <strain>cv. Columbia</strain>
    </source>
</reference>
<reference key="3">
    <citation type="journal article" date="2003" name="Science">
        <title>Empirical analysis of transcriptional activity in the Arabidopsis genome.</title>
        <authorList>
            <person name="Yamada K."/>
            <person name="Lim J."/>
            <person name="Dale J.M."/>
            <person name="Chen H."/>
            <person name="Shinn P."/>
            <person name="Palm C.J."/>
            <person name="Southwick A.M."/>
            <person name="Wu H.C."/>
            <person name="Kim C.J."/>
            <person name="Nguyen M."/>
            <person name="Pham P.K."/>
            <person name="Cheuk R.F."/>
            <person name="Karlin-Newmann G."/>
            <person name="Liu S.X."/>
            <person name="Lam B."/>
            <person name="Sakano H."/>
            <person name="Wu T."/>
            <person name="Yu G."/>
            <person name="Miranda M."/>
            <person name="Quach H.L."/>
            <person name="Tripp M."/>
            <person name="Chang C.H."/>
            <person name="Lee J.M."/>
            <person name="Toriumi M.J."/>
            <person name="Chan M.M."/>
            <person name="Tang C.C."/>
            <person name="Onodera C.S."/>
            <person name="Deng J.M."/>
            <person name="Akiyama K."/>
            <person name="Ansari Y."/>
            <person name="Arakawa T."/>
            <person name="Banh J."/>
            <person name="Banno F."/>
            <person name="Bowser L."/>
            <person name="Brooks S.Y."/>
            <person name="Carninci P."/>
            <person name="Chao Q."/>
            <person name="Choy N."/>
            <person name="Enju A."/>
            <person name="Goldsmith A.D."/>
            <person name="Gurjal M."/>
            <person name="Hansen N.F."/>
            <person name="Hayashizaki Y."/>
            <person name="Johnson-Hopson C."/>
            <person name="Hsuan V.W."/>
            <person name="Iida K."/>
            <person name="Karnes M."/>
            <person name="Khan S."/>
            <person name="Koesema E."/>
            <person name="Ishida J."/>
            <person name="Jiang P.X."/>
            <person name="Jones T."/>
            <person name="Kawai J."/>
            <person name="Kamiya A."/>
            <person name="Meyers C."/>
            <person name="Nakajima M."/>
            <person name="Narusaka M."/>
            <person name="Seki M."/>
            <person name="Sakurai T."/>
            <person name="Satou M."/>
            <person name="Tamse R."/>
            <person name="Vaysberg M."/>
            <person name="Wallender E.K."/>
            <person name="Wong C."/>
            <person name="Yamamura Y."/>
            <person name="Yuan S."/>
            <person name="Shinozaki K."/>
            <person name="Davis R.W."/>
            <person name="Theologis A."/>
            <person name="Ecker J.R."/>
        </authorList>
    </citation>
    <scope>NUCLEOTIDE SEQUENCE [LARGE SCALE MRNA] (ISOFORM 1)</scope>
    <source>
        <strain>cv. Columbia</strain>
    </source>
</reference>
<reference key="4">
    <citation type="journal article" date="2002" name="Plant J.">
        <title>Expression of Arabidopsis SR-like splicing proteins confers salt tolerance to yeast and transgenic plants.</title>
        <authorList>
            <person name="Forment J."/>
            <person name="Naranjo M.A."/>
            <person name="Roldan M."/>
            <person name="Serrano R."/>
            <person name="Vicente O."/>
        </authorList>
    </citation>
    <scope>FUNCTION</scope>
    <scope>PHOSPHORYLATION</scope>
    <scope>TISSUE SPECIFICITY</scope>
</reference>
<accession>Q8RWB1</accession>
<accession>Q9FHS8</accession>
<protein>
    <recommendedName>
        <fullName evidence="4">Pre-mRNA splicing factor SR-like 1</fullName>
        <shortName evidence="4">AtSRL1</shortName>
    </recommendedName>
</protein>
<dbReference type="EMBL" id="AB017069">
    <property type="protein sequence ID" value="BAB09109.1"/>
    <property type="molecule type" value="Genomic_DNA"/>
</dbReference>
<dbReference type="EMBL" id="CP002688">
    <property type="protein sequence ID" value="AED94173.1"/>
    <property type="molecule type" value="Genomic_DNA"/>
</dbReference>
<dbReference type="EMBL" id="CP002688">
    <property type="protein sequence ID" value="AED94174.1"/>
    <property type="molecule type" value="Genomic_DNA"/>
</dbReference>
<dbReference type="EMBL" id="AY093216">
    <property type="protein sequence ID" value="AAM13215.1"/>
    <property type="molecule type" value="mRNA"/>
</dbReference>
<dbReference type="EMBL" id="BT008856">
    <property type="protein sequence ID" value="AAP68295.1"/>
    <property type="molecule type" value="mRNA"/>
</dbReference>
<dbReference type="RefSeq" id="NP_198553.2">
    <molecule id="Q8RWB1-2"/>
    <property type="nucleotide sequence ID" value="NM_123096.3"/>
</dbReference>
<dbReference type="RefSeq" id="NP_851101.1">
    <molecule id="Q8RWB1-1"/>
    <property type="nucleotide sequence ID" value="NM_180770.2"/>
</dbReference>
<dbReference type="SMR" id="Q8RWB1"/>
<dbReference type="FunCoup" id="Q8RWB1">
    <property type="interactions" value="1645"/>
</dbReference>
<dbReference type="STRING" id="3702.Q8RWB1"/>
<dbReference type="iPTMnet" id="Q8RWB1"/>
<dbReference type="PaxDb" id="3702-AT5G37370.1"/>
<dbReference type="EnsemblPlants" id="AT5G37370.1">
    <molecule id="Q8RWB1-1"/>
    <property type="protein sequence ID" value="AT5G37370.1"/>
    <property type="gene ID" value="AT5G37370"/>
</dbReference>
<dbReference type="EnsemblPlants" id="AT5G37370.2">
    <molecule id="Q8RWB1-2"/>
    <property type="protein sequence ID" value="AT5G37370.2"/>
    <property type="gene ID" value="AT5G37370"/>
</dbReference>
<dbReference type="GeneID" id="833711"/>
<dbReference type="Gramene" id="AT5G37370.1">
    <molecule id="Q8RWB1-1"/>
    <property type="protein sequence ID" value="AT5G37370.1"/>
    <property type="gene ID" value="AT5G37370"/>
</dbReference>
<dbReference type="Gramene" id="AT5G37370.2">
    <molecule id="Q8RWB1-2"/>
    <property type="protein sequence ID" value="AT5G37370.2"/>
    <property type="gene ID" value="AT5G37370"/>
</dbReference>
<dbReference type="KEGG" id="ath:AT5G37370"/>
<dbReference type="Araport" id="AT5G37370"/>
<dbReference type="TAIR" id="AT5G37370">
    <property type="gene designation" value="ATSRL1"/>
</dbReference>
<dbReference type="eggNOG" id="KOG2888">
    <property type="taxonomic scope" value="Eukaryota"/>
</dbReference>
<dbReference type="HOGENOM" id="CLU_034151_4_1_1"/>
<dbReference type="InParanoid" id="Q8RWB1"/>
<dbReference type="OMA" id="KERPQSH"/>
<dbReference type="OrthoDB" id="3881at2759"/>
<dbReference type="PhylomeDB" id="Q8RWB1"/>
<dbReference type="PRO" id="PR:Q8RWB1"/>
<dbReference type="Proteomes" id="UP000006548">
    <property type="component" value="Chromosome 5"/>
</dbReference>
<dbReference type="ExpressionAtlas" id="Q8RWB1">
    <property type="expression patterns" value="baseline and differential"/>
</dbReference>
<dbReference type="GO" id="GO:0005681">
    <property type="term" value="C:spliceosomal complex"/>
    <property type="evidence" value="ECO:0007669"/>
    <property type="project" value="UniProtKB-KW"/>
</dbReference>
<dbReference type="GO" id="GO:0006397">
    <property type="term" value="P:mRNA processing"/>
    <property type="evidence" value="ECO:0007669"/>
    <property type="project" value="UniProtKB-KW"/>
</dbReference>
<dbReference type="GO" id="GO:0010226">
    <property type="term" value="P:response to lithium ion"/>
    <property type="evidence" value="ECO:0000315"/>
    <property type="project" value="UniProtKB"/>
</dbReference>
<dbReference type="GO" id="GO:0009651">
    <property type="term" value="P:response to salt stress"/>
    <property type="evidence" value="ECO:0000315"/>
    <property type="project" value="TAIR"/>
</dbReference>
<dbReference type="GO" id="GO:0008380">
    <property type="term" value="P:RNA splicing"/>
    <property type="evidence" value="ECO:0007669"/>
    <property type="project" value="UniProtKB-KW"/>
</dbReference>
<dbReference type="InterPro" id="IPR005037">
    <property type="entry name" value="PRP38"/>
</dbReference>
<dbReference type="InterPro" id="IPR024767">
    <property type="entry name" value="PRP38_C"/>
</dbReference>
<dbReference type="PANTHER" id="PTHR23142">
    <property type="entry name" value="PRE-MRNA-SPLICING FACTOR 38A-RELATED"/>
    <property type="match status" value="1"/>
</dbReference>
<dbReference type="Pfam" id="PF03371">
    <property type="entry name" value="PRP38"/>
    <property type="match status" value="1"/>
</dbReference>
<dbReference type="Pfam" id="PF12871">
    <property type="entry name" value="PRP38_assoc"/>
    <property type="match status" value="1"/>
</dbReference>
<proteinExistence type="evidence at protein level"/>
<comment type="function">
    <text evidence="3 5">May be required for pre-mRNA splicing (Probable). Confers salt tolerance to LiCl and NaCl (PubMed:12047626).</text>
</comment>
<comment type="subcellular location">
    <subcellularLocation>
        <location evidence="1">Nucleus</location>
    </subcellularLocation>
</comment>
<comment type="alternative products">
    <event type="alternative splicing"/>
    <isoform>
        <id>Q8RWB1-1</id>
        <name>1</name>
        <sequence type="displayed"/>
    </isoform>
    <isoform>
        <id>Q8RWB1-2</id>
        <name>2</name>
        <sequence type="described" ref="VSP_058660"/>
    </isoform>
</comment>
<comment type="tissue specificity">
    <text evidence="3">Mostly expressed in siliques and leaves, also present in seedlings, flowers and stems, and, at low levels, in roots.</text>
</comment>
<comment type="PTM">
    <text evidence="3">Phosphorylated.</text>
</comment>
<comment type="similarity">
    <text evidence="5">Belongs to the PRP38 family.</text>
</comment>
<gene>
    <name evidence="4" type="primary">SRL1</name>
    <name evidence="6" type="ordered locus">At5g37370</name>
    <name evidence="7" type="ORF">MNJ8.19</name>
</gene>